<comment type="function">
    <text evidence="1">May play a role in mediating neutrophil activation and chemotaxis.</text>
</comment>
<comment type="subunit">
    <text>Binds actin.</text>
</comment>
<comment type="interaction">
    <interactant intactId="EBI-9060697">
        <id>P33241</id>
    </interactant>
    <interactant intactId="EBI-349854">
        <id>P13569</id>
        <label>CFTR</label>
    </interactant>
    <organismsDiffer>false</organismsDiffer>
    <experiments>4</experiments>
</comment>
<comment type="subcellular location">
    <subcellularLocation>
        <location>Cell membrane</location>
        <topology>Peripheral membrane protein</topology>
        <orientation>Cytoplasmic side</orientation>
    </subcellularLocation>
</comment>
<comment type="alternative products">
    <event type="alternative splicing"/>
    <isoform>
        <id>P33241-1</id>
        <name>1</name>
        <sequence type="displayed"/>
    </isoform>
    <isoform>
        <id>P33241-2</id>
        <name>2</name>
        <sequence type="described" ref="VSP_045655"/>
    </isoform>
    <isoform>
        <id>P33241-3</id>
        <name>3</name>
        <sequence type="described" ref="VSP_045983"/>
    </isoform>
</comment>
<comment type="tissue specificity">
    <text>Activated T-lymphocytes.</text>
</comment>
<comment type="PTM">
    <text evidence="1">Phosphorylated by casein kinase II, protein kinase C and MAPKAPK2. Phosphorylation by PKC induces translocation from membrane to cytoplasm. Phosphorylation by MAPKAPK2 may regulate neutrophil chemotaxis (By similarity).</text>
</comment>
<dbReference type="EMBL" id="M33552">
    <property type="protein sequence ID" value="AAA59534.1"/>
    <property type="molecule type" value="mRNA"/>
</dbReference>
<dbReference type="EMBL" id="X55188">
    <property type="protein sequence ID" value="CAA38971.1"/>
    <property type="molecule type" value="mRNA"/>
</dbReference>
<dbReference type="EMBL" id="S67783">
    <property type="protein sequence ID" value="AAB29545.1"/>
    <property type="molecule type" value="mRNA"/>
</dbReference>
<dbReference type="EMBL" id="CR541728">
    <property type="protein sequence ID" value="CAG46529.1"/>
    <property type="molecule type" value="mRNA"/>
</dbReference>
<dbReference type="EMBL" id="CR541754">
    <property type="protein sequence ID" value="CAG46554.1"/>
    <property type="molecule type" value="mRNA"/>
</dbReference>
<dbReference type="EMBL" id="AK056576">
    <property type="protein sequence ID" value="BAG51753.1"/>
    <property type="molecule type" value="mRNA"/>
</dbReference>
<dbReference type="EMBL" id="AK092071">
    <property type="protein sequence ID" value="BAG52478.1"/>
    <property type="molecule type" value="mRNA"/>
</dbReference>
<dbReference type="EMBL" id="AK222733">
    <property type="protein sequence ID" value="BAD96453.1"/>
    <property type="molecule type" value="mRNA"/>
</dbReference>
<dbReference type="EMBL" id="AC051649">
    <property type="status" value="NOT_ANNOTATED_CDS"/>
    <property type="molecule type" value="Genomic_DNA"/>
</dbReference>
<dbReference type="EMBL" id="BC001785">
    <property type="protein sequence ID" value="AAH01785.1"/>
    <property type="molecule type" value="mRNA"/>
</dbReference>
<dbReference type="CCDS" id="CCDS31334.1">
    <molecule id="P33241-1"/>
</dbReference>
<dbReference type="CCDS" id="CCDS31335.1">
    <molecule id="P33241-2"/>
</dbReference>
<dbReference type="CCDS" id="CCDS58110.1">
    <molecule id="P33241-3"/>
</dbReference>
<dbReference type="PIR" id="A43542">
    <property type="entry name" value="A43542"/>
</dbReference>
<dbReference type="RefSeq" id="NP_001013271.1">
    <molecule id="P33241-2"/>
    <property type="nucleotide sequence ID" value="NM_001013253.2"/>
</dbReference>
<dbReference type="RefSeq" id="NP_001013272.1">
    <molecule id="P33241-2"/>
    <property type="nucleotide sequence ID" value="NM_001013254.1"/>
</dbReference>
<dbReference type="RefSeq" id="NP_001013273.1">
    <molecule id="P33241-2"/>
    <property type="nucleotide sequence ID" value="NM_001013255.1"/>
</dbReference>
<dbReference type="RefSeq" id="NP_001229861.1">
    <molecule id="P33241-3"/>
    <property type="nucleotide sequence ID" value="NM_001242932.2"/>
</dbReference>
<dbReference type="RefSeq" id="NP_001275934.1">
    <molecule id="P33241-2"/>
    <property type="nucleotide sequence ID" value="NM_001289005.2"/>
</dbReference>
<dbReference type="RefSeq" id="NP_002330.1">
    <molecule id="P33241-1"/>
    <property type="nucleotide sequence ID" value="NM_002339.3"/>
</dbReference>
<dbReference type="PDB" id="3BH8">
    <property type="method" value="X-ray"/>
    <property type="resolution" value="1.65 A"/>
    <property type="chains" value="C=249-258"/>
</dbReference>
<dbReference type="PDB" id="4NO0">
    <property type="method" value="X-ray"/>
    <property type="resolution" value="2.70 A"/>
    <property type="chains" value="C=249-260"/>
</dbReference>
<dbReference type="PDB" id="4NO2">
    <property type="method" value="X-ray"/>
    <property type="resolution" value="2.00 A"/>
    <property type="chains" value="C=249-260"/>
</dbReference>
<dbReference type="PDBsum" id="3BH8"/>
<dbReference type="PDBsum" id="4NO0"/>
<dbReference type="PDBsum" id="4NO2"/>
<dbReference type="SMR" id="P33241"/>
<dbReference type="BioGRID" id="110224">
    <property type="interactions" value="39"/>
</dbReference>
<dbReference type="FunCoup" id="P33241">
    <property type="interactions" value="193"/>
</dbReference>
<dbReference type="IntAct" id="P33241">
    <property type="interactions" value="27"/>
</dbReference>
<dbReference type="MINT" id="P33241"/>
<dbReference type="STRING" id="9606.ENSP00000371194"/>
<dbReference type="GlyCosmos" id="P33241">
    <property type="glycosylation" value="1 site, 1 glycan"/>
</dbReference>
<dbReference type="GlyGen" id="P33241">
    <property type="glycosylation" value="3 sites, 1 O-linked glycan (3 sites)"/>
</dbReference>
<dbReference type="iPTMnet" id="P33241"/>
<dbReference type="PhosphoSitePlus" id="P33241"/>
<dbReference type="BioMuta" id="LSP1"/>
<dbReference type="DMDM" id="462553"/>
<dbReference type="jPOST" id="P33241"/>
<dbReference type="MassIVE" id="P33241"/>
<dbReference type="PaxDb" id="9606-ENSP00000371194"/>
<dbReference type="PeptideAtlas" id="P33241"/>
<dbReference type="ProteomicsDB" id="19304"/>
<dbReference type="ProteomicsDB" id="20148"/>
<dbReference type="ProteomicsDB" id="54904">
    <molecule id="P33241-1"/>
</dbReference>
<dbReference type="ABCD" id="P33241">
    <property type="antibodies" value="1 sequenced antibody"/>
</dbReference>
<dbReference type="Antibodypedia" id="4493">
    <property type="antibodies" value="656 antibodies from 39 providers"/>
</dbReference>
<dbReference type="DNASU" id="4046"/>
<dbReference type="Ensembl" id="ENST00000311604.8">
    <molecule id="P33241-1"/>
    <property type="protein sequence ID" value="ENSP00000308383.4"/>
    <property type="gene ID" value="ENSG00000130592.17"/>
</dbReference>
<dbReference type="Ensembl" id="ENST00000381775.5">
    <molecule id="P33241-3"/>
    <property type="protein sequence ID" value="ENSP00000371194.1"/>
    <property type="gene ID" value="ENSG00000130592.17"/>
</dbReference>
<dbReference type="Ensembl" id="ENST00000405957.6">
    <molecule id="P33241-2"/>
    <property type="protein sequence ID" value="ENSP00000383932.2"/>
    <property type="gene ID" value="ENSG00000130592.17"/>
</dbReference>
<dbReference type="Ensembl" id="ENST00000406638.6">
    <molecule id="P33241-2"/>
    <property type="protein sequence ID" value="ENSP00000384022.2"/>
    <property type="gene ID" value="ENSG00000130592.17"/>
</dbReference>
<dbReference type="Ensembl" id="ENST00000612798.4">
    <molecule id="P33241-2"/>
    <property type="protein sequence ID" value="ENSP00000484140.1"/>
    <property type="gene ID" value="ENSG00000130592.17"/>
</dbReference>
<dbReference type="Ensembl" id="ENST00000672349.1">
    <molecule id="P33241-2"/>
    <property type="protein sequence ID" value="ENSP00000500618.1"/>
    <property type="gene ID" value="ENSG00000288199.3"/>
</dbReference>
<dbReference type="Ensembl" id="ENST00000672565.3">
    <molecule id="P33241-1"/>
    <property type="protein sequence ID" value="ENSP00000500350.1"/>
    <property type="gene ID" value="ENSG00000288199.3"/>
</dbReference>
<dbReference type="Ensembl" id="ENST00000673051.1">
    <molecule id="P33241-2"/>
    <property type="protein sequence ID" value="ENSP00000500060.1"/>
    <property type="gene ID" value="ENSG00000288199.3"/>
</dbReference>
<dbReference type="Ensembl" id="ENST00000673183.1">
    <molecule id="P33241-3"/>
    <property type="protein sequence ID" value="ENSP00000500923.1"/>
    <property type="gene ID" value="ENSG00000288199.3"/>
</dbReference>
<dbReference type="Ensembl" id="ENST00000673397.1">
    <molecule id="P33241-2"/>
    <property type="protein sequence ID" value="ENSP00000500330.1"/>
    <property type="gene ID" value="ENSG00000288199.3"/>
</dbReference>
<dbReference type="GeneID" id="4046"/>
<dbReference type="KEGG" id="hsa:4046"/>
<dbReference type="MANE-Select" id="ENST00000311604.8">
    <property type="protein sequence ID" value="ENSP00000308383.4"/>
    <property type="RefSeq nucleotide sequence ID" value="NM_002339.3"/>
    <property type="RefSeq protein sequence ID" value="NP_002330.1"/>
</dbReference>
<dbReference type="UCSC" id="uc001lui.3">
    <molecule id="P33241-1"/>
    <property type="organism name" value="human"/>
</dbReference>
<dbReference type="AGR" id="HGNC:6707"/>
<dbReference type="CTD" id="4046"/>
<dbReference type="DisGeNET" id="4046"/>
<dbReference type="GeneCards" id="LSP1"/>
<dbReference type="HGNC" id="HGNC:6707">
    <property type="gene designation" value="LSP1"/>
</dbReference>
<dbReference type="HPA" id="ENSG00000130592">
    <property type="expression patterns" value="Tissue enhanced (adrenal gland, lymphoid tissue)"/>
</dbReference>
<dbReference type="MIM" id="153432">
    <property type="type" value="gene"/>
</dbReference>
<dbReference type="neXtProt" id="NX_P33241"/>
<dbReference type="OpenTargets" id="ENSG00000130592"/>
<dbReference type="PharmGKB" id="PA30472"/>
<dbReference type="VEuPathDB" id="HostDB:ENSG00000130592"/>
<dbReference type="eggNOG" id="KOG3656">
    <property type="taxonomic scope" value="Eukaryota"/>
</dbReference>
<dbReference type="GeneTree" id="ENSGT00940000153901"/>
<dbReference type="HOGENOM" id="CLU_055750_0_0_1"/>
<dbReference type="InParanoid" id="P33241"/>
<dbReference type="OMA" id="TRIDDKM"/>
<dbReference type="OrthoDB" id="9947942at2759"/>
<dbReference type="PAN-GO" id="P33241">
    <property type="GO annotations" value="0 GO annotations based on evolutionary models"/>
</dbReference>
<dbReference type="PhylomeDB" id="P33241"/>
<dbReference type="TreeFam" id="TF336257"/>
<dbReference type="PathwayCommons" id="P33241"/>
<dbReference type="SignaLink" id="P33241"/>
<dbReference type="SIGNOR" id="P33241"/>
<dbReference type="BioGRID-ORCS" id="4046">
    <property type="hits" value="145 hits in 1149 CRISPR screens"/>
</dbReference>
<dbReference type="ChiTaRS" id="LSP1">
    <property type="organism name" value="human"/>
</dbReference>
<dbReference type="EvolutionaryTrace" id="P33241"/>
<dbReference type="GeneWiki" id="LSP1"/>
<dbReference type="GenomeRNAi" id="4046"/>
<dbReference type="Pharos" id="P33241">
    <property type="development level" value="Tbio"/>
</dbReference>
<dbReference type="PRO" id="PR:P33241"/>
<dbReference type="Proteomes" id="UP000005640">
    <property type="component" value="Chromosome 11"/>
</dbReference>
<dbReference type="RNAct" id="P33241">
    <property type="molecule type" value="protein"/>
</dbReference>
<dbReference type="Bgee" id="ENSG00000130592">
    <property type="expression patterns" value="Expressed in granulocyte and 101 other cell types or tissues"/>
</dbReference>
<dbReference type="ExpressionAtlas" id="P33241">
    <property type="expression patterns" value="baseline and differential"/>
</dbReference>
<dbReference type="GO" id="GO:0015629">
    <property type="term" value="C:actin cytoskeleton"/>
    <property type="evidence" value="ECO:0000304"/>
    <property type="project" value="ProtInc"/>
</dbReference>
<dbReference type="GO" id="GO:0070062">
    <property type="term" value="C:extracellular exosome"/>
    <property type="evidence" value="ECO:0007005"/>
    <property type="project" value="UniProtKB"/>
</dbReference>
<dbReference type="GO" id="GO:0016020">
    <property type="term" value="C:membrane"/>
    <property type="evidence" value="ECO:0007005"/>
    <property type="project" value="UniProtKB"/>
</dbReference>
<dbReference type="GO" id="GO:0005886">
    <property type="term" value="C:plasma membrane"/>
    <property type="evidence" value="ECO:0007669"/>
    <property type="project" value="UniProtKB-SubCell"/>
</dbReference>
<dbReference type="GO" id="GO:0003779">
    <property type="term" value="F:actin binding"/>
    <property type="evidence" value="ECO:0000304"/>
    <property type="project" value="ProtInc"/>
</dbReference>
<dbReference type="GO" id="GO:0006968">
    <property type="term" value="P:cellular defense response"/>
    <property type="evidence" value="ECO:0000304"/>
    <property type="project" value="ProtInc"/>
</dbReference>
<dbReference type="GO" id="GO:0098761">
    <property type="term" value="P:cellular response to interleukin-7"/>
    <property type="evidence" value="ECO:0007669"/>
    <property type="project" value="Ensembl"/>
</dbReference>
<dbReference type="GO" id="GO:0006935">
    <property type="term" value="P:chemotaxis"/>
    <property type="evidence" value="ECO:0007669"/>
    <property type="project" value="Ensembl"/>
</dbReference>
<dbReference type="GO" id="GO:0007165">
    <property type="term" value="P:signal transduction"/>
    <property type="evidence" value="ECO:0007669"/>
    <property type="project" value="InterPro"/>
</dbReference>
<dbReference type="InterPro" id="IPR006018">
    <property type="entry name" value="Caldesmon_LSP"/>
</dbReference>
<dbReference type="InterPro" id="IPR002211">
    <property type="entry name" value="Lymphspecific"/>
</dbReference>
<dbReference type="PANTHER" id="PTHR18949">
    <property type="entry name" value="CALDESMON"/>
    <property type="match status" value="1"/>
</dbReference>
<dbReference type="PANTHER" id="PTHR18949:SF1">
    <property type="entry name" value="LYMPHOCYTE-SPECIFIC PROTEIN 1"/>
    <property type="match status" value="1"/>
</dbReference>
<dbReference type="Pfam" id="PF02029">
    <property type="entry name" value="Caldesmon"/>
    <property type="match status" value="1"/>
</dbReference>
<dbReference type="PRINTS" id="PR01083">
    <property type="entry name" value="LYMPHSPCIFIC"/>
</dbReference>
<protein>
    <recommendedName>
        <fullName>Lymphocyte-specific protein 1</fullName>
    </recommendedName>
    <alternativeName>
        <fullName>47 kDa actin-binding protein</fullName>
    </alternativeName>
    <alternativeName>
        <fullName>52 kDa phosphoprotein</fullName>
        <shortName>pp52</shortName>
    </alternativeName>
    <alternativeName>
        <fullName>Lymphocyte-specific antigen WP34</fullName>
    </alternativeName>
</protein>
<accession>P33241</accession>
<accession>B3KPP1</accession>
<accession>B3KRR6</accession>
<accession>E9PBV6</accession>
<accession>E9PFP3</accession>
<accession>Q16096</accession>
<accession>Q53H48</accession>
<accession>Q6FHM3</accession>
<accession>Q9BUY8</accession>
<gene>
    <name type="primary">LSP1</name>
    <name type="synonym">WP34</name>
</gene>
<name>LSP1_HUMAN</name>
<evidence type="ECO:0000250" key="1"/>
<evidence type="ECO:0000250" key="2">
    <source>
        <dbReference type="UniProtKB" id="P19973"/>
    </source>
</evidence>
<evidence type="ECO:0000256" key="3">
    <source>
        <dbReference type="SAM" id="MobiDB-lite"/>
    </source>
</evidence>
<evidence type="ECO:0000269" key="4">
    <source>
    </source>
</evidence>
<evidence type="ECO:0000269" key="5">
    <source>
    </source>
</evidence>
<evidence type="ECO:0000269" key="6">
    <source>
    </source>
</evidence>
<evidence type="ECO:0000269" key="7">
    <source ref="6"/>
</evidence>
<evidence type="ECO:0000303" key="8">
    <source>
    </source>
</evidence>
<evidence type="ECO:0000305" key="9"/>
<evidence type="ECO:0007744" key="10">
    <source>
    </source>
</evidence>
<evidence type="ECO:0007744" key="11">
    <source>
    </source>
</evidence>
<evidence type="ECO:0007744" key="12">
    <source>
    </source>
</evidence>
<evidence type="ECO:0007744" key="13">
    <source>
    </source>
</evidence>
<evidence type="ECO:0007829" key="14">
    <source>
        <dbReference type="PDB" id="4NO2"/>
    </source>
</evidence>
<sequence length="339" mass="37192">MAEASSDPGAEEREELLGPTAQWSVEDEEEAVHEQCQHERDRQLQAQDEEGGGHVPERPKQEMLLSLKPSEAPELDEDEGFGDWSQRPEQRQQHEGAQGALDSGEPPQCRSPEGEQEDRPGLHAYEKEDSDEVHLEELSLSKEGPGPEDTVQDNLGAAGAEEEQEEHQKCQQPRTPSPLVLEGTIEQSSPPLSPTTKLIDRTESLNRSIEKSNSVKKSQPDLPISKIDQWLEQYTQAIETAGRTPKLARQASIELPSMAVASTKSRWETGEVQAQSAAKTPSCKDIVAGDMSKKSLWEQKGGSKTSSTIKSTPSGKRYKFVATGHGKYEKVLVEGGPAP</sequence>
<keyword id="KW-0002">3D-structure</keyword>
<keyword id="KW-0007">Acetylation</keyword>
<keyword id="KW-0025">Alternative splicing</keyword>
<keyword id="KW-1003">Cell membrane</keyword>
<keyword id="KW-0903">Direct protein sequencing</keyword>
<keyword id="KW-0472">Membrane</keyword>
<keyword id="KW-0597">Phosphoprotein</keyword>
<keyword id="KW-1267">Proteomics identification</keyword>
<keyword id="KW-1185">Reference proteome</keyword>
<reference key="1">
    <citation type="journal article" date="1990" name="J. Immunol.">
        <title>Human and mouse LSP1 genes code for highly conserved phosphoproteins.</title>
        <authorList>
            <person name="Jongstra-Bilen J."/>
            <person name="Young A.J."/>
            <person name="Chong R."/>
            <person name="Jongstra J."/>
        </authorList>
    </citation>
    <scope>NUCLEOTIDE SEQUENCE [MRNA] (ISOFORM 1)</scope>
</reference>
<reference key="2">
    <citation type="journal article" date="1990" name="Eur. J. Immunol.">
        <title>Molecular cloning and characterization of WP34, a phosphorylated human lymphocyte differentiation and activation antigen.</title>
        <authorList>
            <person name="Kadiyala R.K."/>
            <person name="McIntyre B.W."/>
            <person name="Krensky A.M."/>
        </authorList>
    </citation>
    <scope>NUCLEOTIDE SEQUENCE [MRNA] (ISOFORM 1)</scope>
    <source>
        <tissue>Lymphocyte</tissue>
    </source>
</reference>
<reference key="3">
    <citation type="journal article" date="1994" name="Blood">
        <title>The 47-kD protein increased in neutrophil actin dysfunction with 47- and 89-kD protein abnormalities is lymphocyte-specific protein.</title>
        <authorList>
            <person name="Howard T."/>
            <person name="Li Y."/>
            <person name="Torres M."/>
            <person name="Guerrero A."/>
            <person name="Coates T."/>
        </authorList>
    </citation>
    <scope>NUCLEOTIDE SEQUENCE [MRNA] (ISOFORM 1)</scope>
    <scope>PARTIAL PROTEIN SEQUENCE</scope>
</reference>
<reference key="4">
    <citation type="submission" date="2004-06" db="EMBL/GenBank/DDBJ databases">
        <title>Cloning of human full open reading frames in Gateway(TM) system entry vector (pDONR201).</title>
        <authorList>
            <person name="Ebert L."/>
            <person name="Schick M."/>
            <person name="Neubert P."/>
            <person name="Schatten R."/>
            <person name="Henze S."/>
            <person name="Korn B."/>
        </authorList>
    </citation>
    <scope>NUCLEOTIDE SEQUENCE [LARGE SCALE MRNA] (ISOFORM 1)</scope>
</reference>
<reference key="5">
    <citation type="journal article" date="2004" name="Nat. Genet.">
        <title>Complete sequencing and characterization of 21,243 full-length human cDNAs.</title>
        <authorList>
            <person name="Ota T."/>
            <person name="Suzuki Y."/>
            <person name="Nishikawa T."/>
            <person name="Otsuki T."/>
            <person name="Sugiyama T."/>
            <person name="Irie R."/>
            <person name="Wakamatsu A."/>
            <person name="Hayashi K."/>
            <person name="Sato H."/>
            <person name="Nagai K."/>
            <person name="Kimura K."/>
            <person name="Makita H."/>
            <person name="Sekine M."/>
            <person name="Obayashi M."/>
            <person name="Nishi T."/>
            <person name="Shibahara T."/>
            <person name="Tanaka T."/>
            <person name="Ishii S."/>
            <person name="Yamamoto J."/>
            <person name="Saito K."/>
            <person name="Kawai Y."/>
            <person name="Isono Y."/>
            <person name="Nakamura Y."/>
            <person name="Nagahari K."/>
            <person name="Murakami K."/>
            <person name="Yasuda T."/>
            <person name="Iwayanagi T."/>
            <person name="Wagatsuma M."/>
            <person name="Shiratori A."/>
            <person name="Sudo H."/>
            <person name="Hosoiri T."/>
            <person name="Kaku Y."/>
            <person name="Kodaira H."/>
            <person name="Kondo H."/>
            <person name="Sugawara M."/>
            <person name="Takahashi M."/>
            <person name="Kanda K."/>
            <person name="Yokoi T."/>
            <person name="Furuya T."/>
            <person name="Kikkawa E."/>
            <person name="Omura Y."/>
            <person name="Abe K."/>
            <person name="Kamihara K."/>
            <person name="Katsuta N."/>
            <person name="Sato K."/>
            <person name="Tanikawa M."/>
            <person name="Yamazaki M."/>
            <person name="Ninomiya K."/>
            <person name="Ishibashi T."/>
            <person name="Yamashita H."/>
            <person name="Murakawa K."/>
            <person name="Fujimori K."/>
            <person name="Tanai H."/>
            <person name="Kimata M."/>
            <person name="Watanabe M."/>
            <person name="Hiraoka S."/>
            <person name="Chiba Y."/>
            <person name="Ishida S."/>
            <person name="Ono Y."/>
            <person name="Takiguchi S."/>
            <person name="Watanabe S."/>
            <person name="Yosida M."/>
            <person name="Hotuta T."/>
            <person name="Kusano J."/>
            <person name="Kanehori K."/>
            <person name="Takahashi-Fujii A."/>
            <person name="Hara H."/>
            <person name="Tanase T.-O."/>
            <person name="Nomura Y."/>
            <person name="Togiya S."/>
            <person name="Komai F."/>
            <person name="Hara R."/>
            <person name="Takeuchi K."/>
            <person name="Arita M."/>
            <person name="Imose N."/>
            <person name="Musashino K."/>
            <person name="Yuuki H."/>
            <person name="Oshima A."/>
            <person name="Sasaki N."/>
            <person name="Aotsuka S."/>
            <person name="Yoshikawa Y."/>
            <person name="Matsunawa H."/>
            <person name="Ichihara T."/>
            <person name="Shiohata N."/>
            <person name="Sano S."/>
            <person name="Moriya S."/>
            <person name="Momiyama H."/>
            <person name="Satoh N."/>
            <person name="Takami S."/>
            <person name="Terashima Y."/>
            <person name="Suzuki O."/>
            <person name="Nakagawa S."/>
            <person name="Senoh A."/>
            <person name="Mizoguchi H."/>
            <person name="Goto Y."/>
            <person name="Shimizu F."/>
            <person name="Wakebe H."/>
            <person name="Hishigaki H."/>
            <person name="Watanabe T."/>
            <person name="Sugiyama A."/>
            <person name="Takemoto M."/>
            <person name="Kawakami B."/>
            <person name="Yamazaki M."/>
            <person name="Watanabe K."/>
            <person name="Kumagai A."/>
            <person name="Itakura S."/>
            <person name="Fukuzumi Y."/>
            <person name="Fujimori Y."/>
            <person name="Komiyama M."/>
            <person name="Tashiro H."/>
            <person name="Tanigami A."/>
            <person name="Fujiwara T."/>
            <person name="Ono T."/>
            <person name="Yamada K."/>
            <person name="Fujii Y."/>
            <person name="Ozaki K."/>
            <person name="Hirao M."/>
            <person name="Ohmori Y."/>
            <person name="Kawabata A."/>
            <person name="Hikiji T."/>
            <person name="Kobatake N."/>
            <person name="Inagaki H."/>
            <person name="Ikema Y."/>
            <person name="Okamoto S."/>
            <person name="Okitani R."/>
            <person name="Kawakami T."/>
            <person name="Noguchi S."/>
            <person name="Itoh T."/>
            <person name="Shigeta K."/>
            <person name="Senba T."/>
            <person name="Matsumura K."/>
            <person name="Nakajima Y."/>
            <person name="Mizuno T."/>
            <person name="Morinaga M."/>
            <person name="Sasaki M."/>
            <person name="Togashi T."/>
            <person name="Oyama M."/>
            <person name="Hata H."/>
            <person name="Watanabe M."/>
            <person name="Komatsu T."/>
            <person name="Mizushima-Sugano J."/>
            <person name="Satoh T."/>
            <person name="Shirai Y."/>
            <person name="Takahashi Y."/>
            <person name="Nakagawa K."/>
            <person name="Okumura K."/>
            <person name="Nagase T."/>
            <person name="Nomura N."/>
            <person name="Kikuchi H."/>
            <person name="Masuho Y."/>
            <person name="Yamashita R."/>
            <person name="Nakai K."/>
            <person name="Yada T."/>
            <person name="Nakamura Y."/>
            <person name="Ohara O."/>
            <person name="Isogai T."/>
            <person name="Sugano S."/>
        </authorList>
    </citation>
    <scope>NUCLEOTIDE SEQUENCE [LARGE SCALE MRNA] (ISOFORMS 2 AND 3)</scope>
    <scope>VARIANT THR-100</scope>
    <source>
        <tissue>Esophagus</tissue>
        <tissue>Tongue</tissue>
    </source>
</reference>
<reference key="6">
    <citation type="submission" date="2005-04" db="EMBL/GenBank/DDBJ databases">
        <authorList>
            <person name="Suzuki Y."/>
            <person name="Sugano S."/>
            <person name="Totoki Y."/>
            <person name="Toyoda A."/>
            <person name="Takeda T."/>
            <person name="Sakaki Y."/>
            <person name="Tanaka A."/>
            <person name="Yokoyama S."/>
        </authorList>
    </citation>
    <scope>NUCLEOTIDE SEQUENCE [LARGE SCALE MRNA] (ISOFORM 1)</scope>
    <scope>VARIANT THR-100</scope>
    <source>
        <tissue>Dermoid cancer</tissue>
    </source>
</reference>
<reference key="7">
    <citation type="journal article" date="2006" name="Nature">
        <title>Human chromosome 11 DNA sequence and analysis including novel gene identification.</title>
        <authorList>
            <person name="Taylor T.D."/>
            <person name="Noguchi H."/>
            <person name="Totoki Y."/>
            <person name="Toyoda A."/>
            <person name="Kuroki Y."/>
            <person name="Dewar K."/>
            <person name="Lloyd C."/>
            <person name="Itoh T."/>
            <person name="Takeda T."/>
            <person name="Kim D.-W."/>
            <person name="She X."/>
            <person name="Barlow K.F."/>
            <person name="Bloom T."/>
            <person name="Bruford E."/>
            <person name="Chang J.L."/>
            <person name="Cuomo C.A."/>
            <person name="Eichler E."/>
            <person name="FitzGerald M.G."/>
            <person name="Jaffe D.B."/>
            <person name="LaButti K."/>
            <person name="Nicol R."/>
            <person name="Park H.-S."/>
            <person name="Seaman C."/>
            <person name="Sougnez C."/>
            <person name="Yang X."/>
            <person name="Zimmer A.R."/>
            <person name="Zody M.C."/>
            <person name="Birren B.W."/>
            <person name="Nusbaum C."/>
            <person name="Fujiyama A."/>
            <person name="Hattori M."/>
            <person name="Rogers J."/>
            <person name="Lander E.S."/>
            <person name="Sakaki Y."/>
        </authorList>
    </citation>
    <scope>NUCLEOTIDE SEQUENCE [LARGE SCALE GENOMIC DNA]</scope>
</reference>
<reference key="8">
    <citation type="journal article" date="2004" name="Genome Res.">
        <title>The status, quality, and expansion of the NIH full-length cDNA project: the Mammalian Gene Collection (MGC).</title>
        <authorList>
            <consortium name="The MGC Project Team"/>
        </authorList>
    </citation>
    <scope>NUCLEOTIDE SEQUENCE [LARGE SCALE MRNA] (ISOFORM 1)</scope>
    <scope>VARIANT THR-100</scope>
    <source>
        <tissue>Lymph</tissue>
    </source>
</reference>
<reference key="9">
    <citation type="journal article" date="2007" name="Biochem. Biophys. Res. Commun.">
        <title>MAPKAPK2-mediated LSP1 phosphorylation and FMLP-induced neutrophil polarization.</title>
        <authorList>
            <person name="Wu Y."/>
            <person name="Zhan L."/>
            <person name="Ai Y."/>
            <person name="Hannigan M."/>
            <person name="Gaestel M."/>
            <person name="Huang C.-K."/>
            <person name="Madri J.A."/>
        </authorList>
    </citation>
    <scope>PHOSPHORYLATION AT SER-252 BY MAPKAPK2</scope>
</reference>
<reference key="10">
    <citation type="journal article" date="2008" name="J. Proteome Res.">
        <title>Phosphorylation analysis of primary human T lymphocytes using sequential IMAC and titanium oxide enrichment.</title>
        <authorList>
            <person name="Carrascal M."/>
            <person name="Ovelleiro D."/>
            <person name="Casas V."/>
            <person name="Gay M."/>
            <person name="Abian J."/>
        </authorList>
    </citation>
    <scope>PHOSPHORYLATION [LARGE SCALE ANALYSIS] AT SER-252</scope>
    <scope>IDENTIFICATION BY MASS SPECTROMETRY [LARGE SCALE ANALYSIS]</scope>
    <source>
        <tissue>T-cell</tissue>
    </source>
</reference>
<reference key="11">
    <citation type="journal article" date="2009" name="Sci. Signal.">
        <title>Quantitative phosphoproteomic analysis of T cell receptor signaling reveals system-wide modulation of protein-protein interactions.</title>
        <authorList>
            <person name="Mayya V."/>
            <person name="Lundgren D.H."/>
            <person name="Hwang S.-I."/>
            <person name="Rezaul K."/>
            <person name="Wu L."/>
            <person name="Eng J.K."/>
            <person name="Rodionov V."/>
            <person name="Han D.K."/>
        </authorList>
    </citation>
    <scope>PHOSPHORYLATION [LARGE SCALE ANALYSIS] AT SER-189</scope>
    <scope>IDENTIFICATION BY MASS SPECTROMETRY [LARGE SCALE ANALYSIS]</scope>
    <source>
        <tissue>Leukemic T-cell</tissue>
    </source>
</reference>
<reference key="12">
    <citation type="journal article" date="2009" name="Science">
        <title>Lysine acetylation targets protein complexes and co-regulates major cellular functions.</title>
        <authorList>
            <person name="Choudhary C."/>
            <person name="Kumar C."/>
            <person name="Gnad F."/>
            <person name="Nielsen M.L."/>
            <person name="Rehman M."/>
            <person name="Walther T.C."/>
            <person name="Olsen J.V."/>
            <person name="Mann M."/>
        </authorList>
    </citation>
    <scope>ACETYLATION [LARGE SCALE ANALYSIS] AT LYS-327</scope>
    <scope>IDENTIFICATION BY MASS SPECTROMETRY [LARGE SCALE ANALYSIS]</scope>
</reference>
<reference key="13">
    <citation type="journal article" date="2011" name="BMC Syst. Biol.">
        <title>Initial characterization of the human central proteome.</title>
        <authorList>
            <person name="Burkard T.R."/>
            <person name="Planyavsky M."/>
            <person name="Kaupe I."/>
            <person name="Breitwieser F.P."/>
            <person name="Buerckstuemmer T."/>
            <person name="Bennett K.L."/>
            <person name="Superti-Furga G."/>
            <person name="Colinge J."/>
        </authorList>
    </citation>
    <scope>IDENTIFICATION BY MASS SPECTROMETRY [LARGE SCALE ANALYSIS]</scope>
</reference>
<reference key="14">
    <citation type="journal article" date="2014" name="J. Proteomics">
        <title>An enzyme assisted RP-RPLC approach for in-depth analysis of human liver phosphoproteome.</title>
        <authorList>
            <person name="Bian Y."/>
            <person name="Song C."/>
            <person name="Cheng K."/>
            <person name="Dong M."/>
            <person name="Wang F."/>
            <person name="Huang J."/>
            <person name="Sun D."/>
            <person name="Wang L."/>
            <person name="Ye M."/>
            <person name="Zou H."/>
        </authorList>
    </citation>
    <scope>PHOSPHORYLATION [LARGE SCALE ANALYSIS] AT SER-24; SER-111; SER-188; SER-189; SER-193 AND SER-252</scope>
    <scope>IDENTIFICATION BY MASS SPECTROMETRY [LARGE SCALE ANALYSIS]</scope>
    <source>
        <tissue>Liver</tissue>
    </source>
</reference>
<reference key="15">
    <citation type="journal article" date="2015" name="Proteomics">
        <title>N-terminome analysis of the human mitochondrial proteome.</title>
        <authorList>
            <person name="Vaca Jacome A.S."/>
            <person name="Rabilloud T."/>
            <person name="Schaeffer-Reiss C."/>
            <person name="Rompais M."/>
            <person name="Ayoub D."/>
            <person name="Lane L."/>
            <person name="Bairoch A."/>
            <person name="Van Dorsselaer A."/>
            <person name="Carapito C."/>
        </authorList>
    </citation>
    <scope>IDENTIFICATION BY MASS SPECTROMETRY [LARGE SCALE ANALYSIS]</scope>
</reference>
<proteinExistence type="evidence at protein level"/>
<organism>
    <name type="scientific">Homo sapiens</name>
    <name type="common">Human</name>
    <dbReference type="NCBI Taxonomy" id="9606"/>
    <lineage>
        <taxon>Eukaryota</taxon>
        <taxon>Metazoa</taxon>
        <taxon>Chordata</taxon>
        <taxon>Craniata</taxon>
        <taxon>Vertebrata</taxon>
        <taxon>Euteleostomi</taxon>
        <taxon>Mammalia</taxon>
        <taxon>Eutheria</taxon>
        <taxon>Euarchontoglires</taxon>
        <taxon>Primates</taxon>
        <taxon>Haplorrhini</taxon>
        <taxon>Catarrhini</taxon>
        <taxon>Hominidae</taxon>
        <taxon>Homo</taxon>
    </lineage>
</organism>
<feature type="chain" id="PRO_0000084503" description="Lymphocyte-specific protein 1">
    <location>
        <begin position="1"/>
        <end position="339"/>
    </location>
</feature>
<feature type="region of interest" description="Disordered" evidence="3">
    <location>
        <begin position="1"/>
        <end position="198"/>
    </location>
</feature>
<feature type="region of interest" description="Disordered" evidence="3">
    <location>
        <begin position="294"/>
        <end position="315"/>
    </location>
</feature>
<feature type="compositionally biased region" description="Basic and acidic residues" evidence="3">
    <location>
        <begin position="32"/>
        <end position="43"/>
    </location>
</feature>
<feature type="compositionally biased region" description="Basic and acidic residues" evidence="3">
    <location>
        <begin position="51"/>
        <end position="61"/>
    </location>
</feature>
<feature type="compositionally biased region" description="Basic and acidic residues" evidence="3">
    <location>
        <begin position="117"/>
        <end position="140"/>
    </location>
</feature>
<feature type="compositionally biased region" description="Polar residues" evidence="3">
    <location>
        <begin position="185"/>
        <end position="196"/>
    </location>
</feature>
<feature type="compositionally biased region" description="Low complexity" evidence="3">
    <location>
        <begin position="300"/>
        <end position="315"/>
    </location>
</feature>
<feature type="modified residue" description="Phosphoserine" evidence="13">
    <location>
        <position position="24"/>
    </location>
</feature>
<feature type="modified residue" description="Phosphoserine" evidence="13">
    <location>
        <position position="111"/>
    </location>
</feature>
<feature type="modified residue" description="Phosphothreonine" evidence="2">
    <location>
        <position position="175"/>
    </location>
</feature>
<feature type="modified residue" description="Phosphoserine" evidence="2">
    <location>
        <position position="177"/>
    </location>
</feature>
<feature type="modified residue" description="Phosphoserine" evidence="13">
    <location>
        <position position="188"/>
    </location>
</feature>
<feature type="modified residue" description="Phosphoserine" evidence="12 13">
    <location>
        <position position="189"/>
    </location>
</feature>
<feature type="modified residue" description="Phosphoserine" evidence="13">
    <location>
        <position position="193"/>
    </location>
</feature>
<feature type="modified residue" description="Phosphoserine; by MAPKAPK2" evidence="6 10 13">
    <location>
        <position position="252"/>
    </location>
</feature>
<feature type="modified residue" description="N6-acetyllysine" evidence="11">
    <location>
        <position position="327"/>
    </location>
</feature>
<feature type="splice variant" id="VSP_045655" description="In isoform 2." evidence="8">
    <location>
        <begin position="1"/>
        <end position="62"/>
    </location>
</feature>
<feature type="splice variant" id="VSP_045983" description="In isoform 3." evidence="8">
    <original>MAEASSDPGAEEREELLG</original>
    <variation>MAPIWSPPGRVSGCHLSSGPAPGSAVGPWLGTPHPSLPLPLAPHKPPPPGLPGSAGQTSLPAQRECVFPGDAAVHQELCGLGFEECLGSIPQAHQCYLTNGPKRRKCSPRRRGRAPAWLCGGSPPCHQGLGHEHPSSGPSTNCSPR</variation>
    <location>
        <begin position="1"/>
        <end position="18"/>
    </location>
</feature>
<feature type="sequence variant" id="VAR_011867" description="In dbSNP:rs621679." evidence="4 5 7">
    <original>A</original>
    <variation>T</variation>
    <location>
        <position position="100"/>
    </location>
</feature>
<feature type="sequence variant" id="VAR_061680" description="In dbSNP:rs11545725.">
    <original>Q</original>
    <variation>L</variation>
    <location>
        <position position="108"/>
    </location>
</feature>
<feature type="sequence variant" id="VAR_011868" description="In dbSNP:rs1803928.">
    <original>Q</original>
    <variation>K</variation>
    <location>
        <position position="229"/>
    </location>
</feature>
<feature type="sequence conflict" description="In Ref. 3; AAB29545." evidence="9" ref="3">
    <location>
        <position position="15"/>
    </location>
</feature>
<feature type="sequence conflict" description="In Ref. 2; CAA38971." evidence="9" ref="2">
    <original>S</original>
    <variation>T</variation>
    <location>
        <position position="24"/>
    </location>
</feature>
<feature type="sequence conflict" description="In Ref. 3; AAB29545." evidence="9" ref="3">
    <location>
        <begin position="100"/>
        <end position="101"/>
    </location>
</feature>
<feature type="sequence conflict" description="In Ref. 5; BAG52478." evidence="9" ref="5">
    <original>E</original>
    <variation>D</variation>
    <location>
        <position position="148"/>
    </location>
</feature>
<feature type="helix" evidence="14">
    <location>
        <begin position="255"/>
        <end position="258"/>
    </location>
</feature>
<feature type="sequence conflict" description="In Ref. 5; BAG52478." evidence="9" ref="5">
    <original>G</original>
    <variation>Q</variation>
    <location sequence="P33241-3">
        <position position="31"/>
    </location>
</feature>